<evidence type="ECO:0000250" key="1"/>
<keyword id="KW-0903">Direct protein sequencing</keyword>
<keyword id="KW-0325">Glycoprotein</keyword>
<keyword id="KW-0393">Immunoglobulin domain</keyword>
<keyword id="KW-1185">Reference proteome</keyword>
<keyword id="KW-0964">Secreted</keyword>
<reference key="1">
    <citation type="journal article" date="1988" name="Comp. Biochem. Physiol.">
        <title>The homology between the serum proteins PO2 in pig, Xk in horse and alpha 1B-glycoprotein in human.</title>
        <authorList>
            <person name="van de Weghe A."/>
            <person name="Coppieters W."/>
            <person name="Bauw G."/>
            <person name="Vandekerckhove J."/>
            <person name="Bouquet Y."/>
        </authorList>
    </citation>
    <scope>PROTEIN SEQUENCE</scope>
    <source>
        <tissue>Plasma</tissue>
    </source>
</reference>
<protein>
    <recommendedName>
        <fullName>Alpha-1B-glycoprotein</fullName>
    </recommendedName>
    <alternativeName>
        <fullName>Alpha-1-B glycoprotein</fullName>
    </alternativeName>
    <alternativeName>
        <fullName>Plasma protein PO2-F</fullName>
    </alternativeName>
</protein>
<comment type="subunit">
    <text evidence="1">Interacts with CRISP3.</text>
</comment>
<comment type="subcellular location">
    <subcellularLocation>
        <location>Secreted</location>
    </subcellularLocation>
</comment>
<comment type="tissue specificity">
    <text>Plasma.</text>
</comment>
<accession>P39092</accession>
<feature type="chain" id="PRO_0000072665" description="Alpha-1B-glycoprotein">
    <location>
        <begin position="1"/>
        <end position="40" status="greater than"/>
    </location>
</feature>
<feature type="glycosylation site" description="N-linked (GlcNAc...) asparagine">
    <location>
        <position position="23"/>
    </location>
</feature>
<feature type="sequence variant">
    <original>S</original>
    <variation>G</variation>
    <location>
        <position position="30"/>
    </location>
</feature>
<feature type="non-terminal residue">
    <location>
        <position position="40"/>
    </location>
</feature>
<organism>
    <name type="scientific">Sus scrofa</name>
    <name type="common">Pig</name>
    <dbReference type="NCBI Taxonomy" id="9823"/>
    <lineage>
        <taxon>Eukaryota</taxon>
        <taxon>Metazoa</taxon>
        <taxon>Chordata</taxon>
        <taxon>Craniata</taxon>
        <taxon>Vertebrata</taxon>
        <taxon>Euteleostomi</taxon>
        <taxon>Mammalia</taxon>
        <taxon>Eutheria</taxon>
        <taxon>Laurasiatheria</taxon>
        <taxon>Artiodactyla</taxon>
        <taxon>Suina</taxon>
        <taxon>Suidae</taxon>
        <taxon>Sus</taxon>
    </lineage>
</organism>
<dbReference type="PIR" id="PL0030">
    <property type="entry name" value="PL0030"/>
</dbReference>
<dbReference type="SMR" id="P39092"/>
<dbReference type="STRING" id="9823.ENSSSCP00000035419"/>
<dbReference type="GlyCosmos" id="P39092">
    <property type="glycosylation" value="1 site, No reported glycans"/>
</dbReference>
<dbReference type="GlyGen" id="P39092">
    <property type="glycosylation" value="1 site"/>
</dbReference>
<dbReference type="InParanoid" id="P39092"/>
<dbReference type="Proteomes" id="UP000008227">
    <property type="component" value="Unplaced"/>
</dbReference>
<dbReference type="Proteomes" id="UP000314985">
    <property type="component" value="Unplaced"/>
</dbReference>
<dbReference type="Proteomes" id="UP000694570">
    <property type="component" value="Unplaced"/>
</dbReference>
<dbReference type="Proteomes" id="UP000694571">
    <property type="component" value="Unplaced"/>
</dbReference>
<dbReference type="Proteomes" id="UP000694720">
    <property type="component" value="Unplaced"/>
</dbReference>
<dbReference type="Proteomes" id="UP000694722">
    <property type="component" value="Unplaced"/>
</dbReference>
<dbReference type="Proteomes" id="UP000694723">
    <property type="component" value="Unplaced"/>
</dbReference>
<dbReference type="Proteomes" id="UP000694724">
    <property type="component" value="Unplaced"/>
</dbReference>
<dbReference type="Proteomes" id="UP000694725">
    <property type="component" value="Unplaced"/>
</dbReference>
<dbReference type="Proteomes" id="UP000694726">
    <property type="component" value="Unplaced"/>
</dbReference>
<dbReference type="Proteomes" id="UP000694727">
    <property type="component" value="Unplaced"/>
</dbReference>
<dbReference type="Proteomes" id="UP000694728">
    <property type="component" value="Unplaced"/>
</dbReference>
<dbReference type="GO" id="GO:0005576">
    <property type="term" value="C:extracellular region"/>
    <property type="evidence" value="ECO:0007669"/>
    <property type="project" value="UniProtKB-SubCell"/>
</dbReference>
<gene>
    <name type="primary">A1BG</name>
</gene>
<proteinExistence type="evidence at protein level"/>
<name>A1BG_PIG</name>
<sequence>ALFLDPPPNLWAEAQSLLEPWANVTLTSQSRLPVLNFQGL</sequence>